<gene>
    <name evidence="1" type="primary">rplA</name>
    <name type="ordered locus">RHECIAT_CH0001738</name>
</gene>
<sequence>MAGKRTRKINEGVDPTKLYALTQAIGMVKERAVAKFDETIEVSMNLGVDPRHADQMVRGVVNLPNGTGRTVRVAVFARGAKADEAKAAGADVVGAEDLVEIVQGGKIEFDRCIATPDMMPLVGRLGKVLGPRGMMPNPKVGTVTMDVAGAVKASKGGAVEFRVEKAGIVHAGIGKASFDAKALEENIRAFADAVIKAKPAGAKGNYVKRVAISSTMGPGVKIEVGSVTAAPTA</sequence>
<evidence type="ECO:0000255" key="1">
    <source>
        <dbReference type="HAMAP-Rule" id="MF_01318"/>
    </source>
</evidence>
<evidence type="ECO:0000305" key="2"/>
<keyword id="KW-0678">Repressor</keyword>
<keyword id="KW-0687">Ribonucleoprotein</keyword>
<keyword id="KW-0689">Ribosomal protein</keyword>
<keyword id="KW-0694">RNA-binding</keyword>
<keyword id="KW-0699">rRNA-binding</keyword>
<keyword id="KW-0810">Translation regulation</keyword>
<keyword id="KW-0820">tRNA-binding</keyword>
<protein>
    <recommendedName>
        <fullName evidence="1">Large ribosomal subunit protein uL1</fullName>
    </recommendedName>
    <alternativeName>
        <fullName evidence="2">50S ribosomal protein L1</fullName>
    </alternativeName>
</protein>
<name>RL1_RHIE6</name>
<dbReference type="EMBL" id="CP001074">
    <property type="protein sequence ID" value="ACE90708.1"/>
    <property type="molecule type" value="Genomic_DNA"/>
</dbReference>
<dbReference type="SMR" id="B3PW56"/>
<dbReference type="KEGG" id="rec:RHECIAT_CH0001738"/>
<dbReference type="eggNOG" id="COG0081">
    <property type="taxonomic scope" value="Bacteria"/>
</dbReference>
<dbReference type="HOGENOM" id="CLU_062853_0_0_5"/>
<dbReference type="Proteomes" id="UP000008817">
    <property type="component" value="Chromosome"/>
</dbReference>
<dbReference type="GO" id="GO:0022625">
    <property type="term" value="C:cytosolic large ribosomal subunit"/>
    <property type="evidence" value="ECO:0007669"/>
    <property type="project" value="TreeGrafter"/>
</dbReference>
<dbReference type="GO" id="GO:0019843">
    <property type="term" value="F:rRNA binding"/>
    <property type="evidence" value="ECO:0007669"/>
    <property type="project" value="UniProtKB-UniRule"/>
</dbReference>
<dbReference type="GO" id="GO:0003735">
    <property type="term" value="F:structural constituent of ribosome"/>
    <property type="evidence" value="ECO:0007669"/>
    <property type="project" value="InterPro"/>
</dbReference>
<dbReference type="GO" id="GO:0000049">
    <property type="term" value="F:tRNA binding"/>
    <property type="evidence" value="ECO:0007669"/>
    <property type="project" value="UniProtKB-KW"/>
</dbReference>
<dbReference type="GO" id="GO:0006417">
    <property type="term" value="P:regulation of translation"/>
    <property type="evidence" value="ECO:0007669"/>
    <property type="project" value="UniProtKB-KW"/>
</dbReference>
<dbReference type="GO" id="GO:0006412">
    <property type="term" value="P:translation"/>
    <property type="evidence" value="ECO:0007669"/>
    <property type="project" value="UniProtKB-UniRule"/>
</dbReference>
<dbReference type="CDD" id="cd00403">
    <property type="entry name" value="Ribosomal_L1"/>
    <property type="match status" value="1"/>
</dbReference>
<dbReference type="FunFam" id="3.40.50.790:FF:000001">
    <property type="entry name" value="50S ribosomal protein L1"/>
    <property type="match status" value="1"/>
</dbReference>
<dbReference type="Gene3D" id="3.30.190.20">
    <property type="match status" value="1"/>
</dbReference>
<dbReference type="Gene3D" id="3.40.50.790">
    <property type="match status" value="1"/>
</dbReference>
<dbReference type="HAMAP" id="MF_01318_B">
    <property type="entry name" value="Ribosomal_uL1_B"/>
    <property type="match status" value="1"/>
</dbReference>
<dbReference type="InterPro" id="IPR005878">
    <property type="entry name" value="Ribosom_uL1_bac-type"/>
</dbReference>
<dbReference type="InterPro" id="IPR002143">
    <property type="entry name" value="Ribosomal_uL1"/>
</dbReference>
<dbReference type="InterPro" id="IPR023674">
    <property type="entry name" value="Ribosomal_uL1-like"/>
</dbReference>
<dbReference type="InterPro" id="IPR028364">
    <property type="entry name" value="Ribosomal_uL1/biogenesis"/>
</dbReference>
<dbReference type="InterPro" id="IPR016095">
    <property type="entry name" value="Ribosomal_uL1_3-a/b-sand"/>
</dbReference>
<dbReference type="InterPro" id="IPR023673">
    <property type="entry name" value="Ribosomal_uL1_CS"/>
</dbReference>
<dbReference type="NCBIfam" id="TIGR01169">
    <property type="entry name" value="rplA_bact"/>
    <property type="match status" value="1"/>
</dbReference>
<dbReference type="PANTHER" id="PTHR36427">
    <property type="entry name" value="54S RIBOSOMAL PROTEIN L1, MITOCHONDRIAL"/>
    <property type="match status" value="1"/>
</dbReference>
<dbReference type="PANTHER" id="PTHR36427:SF3">
    <property type="entry name" value="LARGE RIBOSOMAL SUBUNIT PROTEIN UL1M"/>
    <property type="match status" value="1"/>
</dbReference>
<dbReference type="Pfam" id="PF00687">
    <property type="entry name" value="Ribosomal_L1"/>
    <property type="match status" value="1"/>
</dbReference>
<dbReference type="PIRSF" id="PIRSF002155">
    <property type="entry name" value="Ribosomal_L1"/>
    <property type="match status" value="1"/>
</dbReference>
<dbReference type="SUPFAM" id="SSF56808">
    <property type="entry name" value="Ribosomal protein L1"/>
    <property type="match status" value="1"/>
</dbReference>
<dbReference type="PROSITE" id="PS01199">
    <property type="entry name" value="RIBOSOMAL_L1"/>
    <property type="match status" value="1"/>
</dbReference>
<organism>
    <name type="scientific">Rhizobium etli (strain CIAT 652)</name>
    <dbReference type="NCBI Taxonomy" id="491916"/>
    <lineage>
        <taxon>Bacteria</taxon>
        <taxon>Pseudomonadati</taxon>
        <taxon>Pseudomonadota</taxon>
        <taxon>Alphaproteobacteria</taxon>
        <taxon>Hyphomicrobiales</taxon>
        <taxon>Rhizobiaceae</taxon>
        <taxon>Rhizobium/Agrobacterium group</taxon>
        <taxon>Rhizobium</taxon>
    </lineage>
</organism>
<proteinExistence type="inferred from homology"/>
<accession>B3PW56</accession>
<comment type="function">
    <text evidence="1">Binds directly to 23S rRNA. The L1 stalk is quite mobile in the ribosome, and is involved in E site tRNA release.</text>
</comment>
<comment type="function">
    <text evidence="1">Protein L1 is also a translational repressor protein, it controls the translation of the L11 operon by binding to its mRNA.</text>
</comment>
<comment type="subunit">
    <text evidence="1">Part of the 50S ribosomal subunit.</text>
</comment>
<comment type="similarity">
    <text evidence="1">Belongs to the universal ribosomal protein uL1 family.</text>
</comment>
<feature type="chain" id="PRO_1000141448" description="Large ribosomal subunit protein uL1">
    <location>
        <begin position="1"/>
        <end position="233"/>
    </location>
</feature>
<reference key="1">
    <citation type="journal article" date="2010" name="Appl. Environ. Microbiol.">
        <title>Conserved symbiotic plasmid DNA sequences in the multireplicon pangenomic structure of Rhizobium etli.</title>
        <authorList>
            <person name="Gonzalez V."/>
            <person name="Acosta J.L."/>
            <person name="Santamaria R.I."/>
            <person name="Bustos P."/>
            <person name="Fernandez J.L."/>
            <person name="Hernandez Gonzalez I.L."/>
            <person name="Diaz R."/>
            <person name="Flores M."/>
            <person name="Palacios R."/>
            <person name="Mora J."/>
            <person name="Davila G."/>
        </authorList>
    </citation>
    <scope>NUCLEOTIDE SEQUENCE [LARGE SCALE GENOMIC DNA]</scope>
    <source>
        <strain>CIAT 652</strain>
    </source>
</reference>